<accession>B0JGK4</accession>
<feature type="chain" id="PRO_1000081436" description="Small ribosomal subunit protein bS20">
    <location>
        <begin position="1"/>
        <end position="97"/>
    </location>
</feature>
<feature type="region of interest" description="Disordered" evidence="2">
    <location>
        <begin position="76"/>
        <end position="97"/>
    </location>
</feature>
<feature type="compositionally biased region" description="Basic residues" evidence="2">
    <location>
        <begin position="76"/>
        <end position="85"/>
    </location>
</feature>
<feature type="compositionally biased region" description="Low complexity" evidence="2">
    <location>
        <begin position="86"/>
        <end position="97"/>
    </location>
</feature>
<name>RS20_MICAN</name>
<proteinExistence type="inferred from homology"/>
<protein>
    <recommendedName>
        <fullName evidence="1">Small ribosomal subunit protein bS20</fullName>
    </recommendedName>
    <alternativeName>
        <fullName evidence="3">30S ribosomal protein S20</fullName>
    </alternativeName>
</protein>
<evidence type="ECO:0000255" key="1">
    <source>
        <dbReference type="HAMAP-Rule" id="MF_00500"/>
    </source>
</evidence>
<evidence type="ECO:0000256" key="2">
    <source>
        <dbReference type="SAM" id="MobiDB-lite"/>
    </source>
</evidence>
<evidence type="ECO:0000305" key="3"/>
<gene>
    <name evidence="1" type="primary">rpsT</name>
    <name evidence="1" type="synonym">rps20</name>
    <name type="ordered locus">MAE_54480</name>
</gene>
<dbReference type="EMBL" id="AP009552">
    <property type="protein sequence ID" value="BAG05270.1"/>
    <property type="molecule type" value="Genomic_DNA"/>
</dbReference>
<dbReference type="RefSeq" id="WP_002737368.1">
    <property type="nucleotide sequence ID" value="NC_010296.1"/>
</dbReference>
<dbReference type="SMR" id="B0JGK4"/>
<dbReference type="STRING" id="449447.MAE_54480"/>
<dbReference type="PaxDb" id="449447-MAE_54480"/>
<dbReference type="EnsemblBacteria" id="BAG05270">
    <property type="protein sequence ID" value="BAG05270"/>
    <property type="gene ID" value="MAE_54480"/>
</dbReference>
<dbReference type="GeneID" id="66705828"/>
<dbReference type="KEGG" id="mar:MAE_54480"/>
<dbReference type="eggNOG" id="COG0268">
    <property type="taxonomic scope" value="Bacteria"/>
</dbReference>
<dbReference type="HOGENOM" id="CLU_160655_5_0_3"/>
<dbReference type="BioCyc" id="MAER449447:MAE_RS23670-MONOMER"/>
<dbReference type="Proteomes" id="UP000001510">
    <property type="component" value="Chromosome"/>
</dbReference>
<dbReference type="GO" id="GO:0005829">
    <property type="term" value="C:cytosol"/>
    <property type="evidence" value="ECO:0007669"/>
    <property type="project" value="TreeGrafter"/>
</dbReference>
<dbReference type="GO" id="GO:0015935">
    <property type="term" value="C:small ribosomal subunit"/>
    <property type="evidence" value="ECO:0007669"/>
    <property type="project" value="TreeGrafter"/>
</dbReference>
<dbReference type="GO" id="GO:0070181">
    <property type="term" value="F:small ribosomal subunit rRNA binding"/>
    <property type="evidence" value="ECO:0007669"/>
    <property type="project" value="TreeGrafter"/>
</dbReference>
<dbReference type="GO" id="GO:0003735">
    <property type="term" value="F:structural constituent of ribosome"/>
    <property type="evidence" value="ECO:0007669"/>
    <property type="project" value="InterPro"/>
</dbReference>
<dbReference type="GO" id="GO:0006412">
    <property type="term" value="P:translation"/>
    <property type="evidence" value="ECO:0007669"/>
    <property type="project" value="UniProtKB-UniRule"/>
</dbReference>
<dbReference type="FunFam" id="1.20.58.110:FF:000001">
    <property type="entry name" value="30S ribosomal protein S20"/>
    <property type="match status" value="1"/>
</dbReference>
<dbReference type="Gene3D" id="1.20.58.110">
    <property type="entry name" value="Ribosomal protein S20"/>
    <property type="match status" value="1"/>
</dbReference>
<dbReference type="HAMAP" id="MF_00500">
    <property type="entry name" value="Ribosomal_bS20"/>
    <property type="match status" value="1"/>
</dbReference>
<dbReference type="InterPro" id="IPR002583">
    <property type="entry name" value="Ribosomal_bS20"/>
</dbReference>
<dbReference type="InterPro" id="IPR036510">
    <property type="entry name" value="Ribosomal_bS20_sf"/>
</dbReference>
<dbReference type="NCBIfam" id="TIGR00029">
    <property type="entry name" value="S20"/>
    <property type="match status" value="1"/>
</dbReference>
<dbReference type="PANTHER" id="PTHR33398">
    <property type="entry name" value="30S RIBOSOMAL PROTEIN S20"/>
    <property type="match status" value="1"/>
</dbReference>
<dbReference type="PANTHER" id="PTHR33398:SF1">
    <property type="entry name" value="SMALL RIBOSOMAL SUBUNIT PROTEIN BS20C"/>
    <property type="match status" value="1"/>
</dbReference>
<dbReference type="Pfam" id="PF01649">
    <property type="entry name" value="Ribosomal_S20p"/>
    <property type="match status" value="1"/>
</dbReference>
<dbReference type="SUPFAM" id="SSF46992">
    <property type="entry name" value="Ribosomal protein S20"/>
    <property type="match status" value="1"/>
</dbReference>
<organism>
    <name type="scientific">Microcystis aeruginosa (strain NIES-843 / IAM M-2473)</name>
    <dbReference type="NCBI Taxonomy" id="449447"/>
    <lineage>
        <taxon>Bacteria</taxon>
        <taxon>Bacillati</taxon>
        <taxon>Cyanobacteriota</taxon>
        <taxon>Cyanophyceae</taxon>
        <taxon>Oscillatoriophycideae</taxon>
        <taxon>Chroococcales</taxon>
        <taxon>Microcystaceae</taxon>
        <taxon>Microcystis</taxon>
    </lineage>
</organism>
<sequence>MANTKSALKRVQISERNRLRNKAYKSAVRTLIKKCLVAVSAYGANPSPEGLESAQQALSEAYSKIDKAVKRNVLHRNNGARKKAGLAKALQKVSQAS</sequence>
<reference key="1">
    <citation type="journal article" date="2007" name="DNA Res.">
        <title>Complete genomic structure of the bloom-forming toxic cyanobacterium Microcystis aeruginosa NIES-843.</title>
        <authorList>
            <person name="Kaneko T."/>
            <person name="Nakajima N."/>
            <person name="Okamoto S."/>
            <person name="Suzuki I."/>
            <person name="Tanabe Y."/>
            <person name="Tamaoki M."/>
            <person name="Nakamura Y."/>
            <person name="Kasai F."/>
            <person name="Watanabe A."/>
            <person name="Kawashima K."/>
            <person name="Kishida Y."/>
            <person name="Ono A."/>
            <person name="Shimizu Y."/>
            <person name="Takahashi C."/>
            <person name="Minami C."/>
            <person name="Fujishiro T."/>
            <person name="Kohara M."/>
            <person name="Katoh M."/>
            <person name="Nakazaki N."/>
            <person name="Nakayama S."/>
            <person name="Yamada M."/>
            <person name="Tabata S."/>
            <person name="Watanabe M.M."/>
        </authorList>
    </citation>
    <scope>NUCLEOTIDE SEQUENCE [LARGE SCALE GENOMIC DNA]</scope>
    <source>
        <strain>NIES-843 / IAM M-247</strain>
    </source>
</reference>
<comment type="function">
    <text evidence="1">Binds directly to 16S ribosomal RNA.</text>
</comment>
<comment type="similarity">
    <text evidence="1">Belongs to the bacterial ribosomal protein bS20 family.</text>
</comment>
<keyword id="KW-0687">Ribonucleoprotein</keyword>
<keyword id="KW-0689">Ribosomal protein</keyword>
<keyword id="KW-0694">RNA-binding</keyword>
<keyword id="KW-0699">rRNA-binding</keyword>